<feature type="chain" id="PRO_0000270337" description="Methionine import ATP-binding protein MetN 2">
    <location>
        <begin position="1"/>
        <end position="342"/>
    </location>
</feature>
<feature type="domain" description="ABC transporter" evidence="1">
    <location>
        <begin position="2"/>
        <end position="241"/>
    </location>
</feature>
<feature type="binding site" evidence="1">
    <location>
        <begin position="38"/>
        <end position="45"/>
    </location>
    <ligand>
        <name>ATP</name>
        <dbReference type="ChEBI" id="CHEBI:30616"/>
    </ligand>
</feature>
<dbReference type="EC" id="7.4.2.11" evidence="1"/>
<dbReference type="EMBL" id="BA000028">
    <property type="protein sequence ID" value="BAC14340.1"/>
    <property type="molecule type" value="Genomic_DNA"/>
</dbReference>
<dbReference type="RefSeq" id="WP_011066776.1">
    <property type="nucleotide sequence ID" value="NC_004193.1"/>
</dbReference>
<dbReference type="SMR" id="Q8ENU2"/>
<dbReference type="STRING" id="221109.gene:10734635"/>
<dbReference type="KEGG" id="oih:OB2384"/>
<dbReference type="eggNOG" id="COG1135">
    <property type="taxonomic scope" value="Bacteria"/>
</dbReference>
<dbReference type="HOGENOM" id="CLU_000604_1_3_9"/>
<dbReference type="OrthoDB" id="9802264at2"/>
<dbReference type="PhylomeDB" id="Q8ENU2"/>
<dbReference type="Proteomes" id="UP000000822">
    <property type="component" value="Chromosome"/>
</dbReference>
<dbReference type="GO" id="GO:0005886">
    <property type="term" value="C:plasma membrane"/>
    <property type="evidence" value="ECO:0007669"/>
    <property type="project" value="UniProtKB-SubCell"/>
</dbReference>
<dbReference type="GO" id="GO:0033232">
    <property type="term" value="F:ABC-type D-methionine transporter activity"/>
    <property type="evidence" value="ECO:0007669"/>
    <property type="project" value="UniProtKB-EC"/>
</dbReference>
<dbReference type="GO" id="GO:0005524">
    <property type="term" value="F:ATP binding"/>
    <property type="evidence" value="ECO:0007669"/>
    <property type="project" value="UniProtKB-KW"/>
</dbReference>
<dbReference type="GO" id="GO:0016887">
    <property type="term" value="F:ATP hydrolysis activity"/>
    <property type="evidence" value="ECO:0007669"/>
    <property type="project" value="InterPro"/>
</dbReference>
<dbReference type="CDD" id="cd03258">
    <property type="entry name" value="ABC_MetN_methionine_transporter"/>
    <property type="match status" value="1"/>
</dbReference>
<dbReference type="FunFam" id="3.40.50.300:FF:000056">
    <property type="entry name" value="Cell division ATP-binding protein FtsE"/>
    <property type="match status" value="1"/>
</dbReference>
<dbReference type="Gene3D" id="3.30.70.260">
    <property type="match status" value="1"/>
</dbReference>
<dbReference type="Gene3D" id="3.40.50.300">
    <property type="entry name" value="P-loop containing nucleotide triphosphate hydrolases"/>
    <property type="match status" value="1"/>
</dbReference>
<dbReference type="InterPro" id="IPR003593">
    <property type="entry name" value="AAA+_ATPase"/>
</dbReference>
<dbReference type="InterPro" id="IPR003439">
    <property type="entry name" value="ABC_transporter-like_ATP-bd"/>
</dbReference>
<dbReference type="InterPro" id="IPR017871">
    <property type="entry name" value="ABC_transporter-like_CS"/>
</dbReference>
<dbReference type="InterPro" id="IPR045865">
    <property type="entry name" value="ACT-like_dom_sf"/>
</dbReference>
<dbReference type="InterPro" id="IPR041701">
    <property type="entry name" value="MetN_ABC"/>
</dbReference>
<dbReference type="InterPro" id="IPR050086">
    <property type="entry name" value="MetN_ABC_transporter-like"/>
</dbReference>
<dbReference type="InterPro" id="IPR018449">
    <property type="entry name" value="NIL_domain"/>
</dbReference>
<dbReference type="InterPro" id="IPR027417">
    <property type="entry name" value="P-loop_NTPase"/>
</dbReference>
<dbReference type="PANTHER" id="PTHR43166">
    <property type="entry name" value="AMINO ACID IMPORT ATP-BINDING PROTEIN"/>
    <property type="match status" value="1"/>
</dbReference>
<dbReference type="PANTHER" id="PTHR43166:SF36">
    <property type="entry name" value="METHIONINE IMPORT ATP-BINDING PROTEIN METN 2"/>
    <property type="match status" value="1"/>
</dbReference>
<dbReference type="Pfam" id="PF00005">
    <property type="entry name" value="ABC_tran"/>
    <property type="match status" value="1"/>
</dbReference>
<dbReference type="Pfam" id="PF09383">
    <property type="entry name" value="NIL"/>
    <property type="match status" value="1"/>
</dbReference>
<dbReference type="SMART" id="SM00382">
    <property type="entry name" value="AAA"/>
    <property type="match status" value="1"/>
</dbReference>
<dbReference type="SMART" id="SM00930">
    <property type="entry name" value="NIL"/>
    <property type="match status" value="1"/>
</dbReference>
<dbReference type="SUPFAM" id="SSF55021">
    <property type="entry name" value="ACT-like"/>
    <property type="match status" value="1"/>
</dbReference>
<dbReference type="SUPFAM" id="SSF52540">
    <property type="entry name" value="P-loop containing nucleoside triphosphate hydrolases"/>
    <property type="match status" value="1"/>
</dbReference>
<dbReference type="PROSITE" id="PS00211">
    <property type="entry name" value="ABC_TRANSPORTER_1"/>
    <property type="match status" value="1"/>
</dbReference>
<dbReference type="PROSITE" id="PS50893">
    <property type="entry name" value="ABC_TRANSPORTER_2"/>
    <property type="match status" value="1"/>
</dbReference>
<dbReference type="PROSITE" id="PS51264">
    <property type="entry name" value="METN"/>
    <property type="match status" value="1"/>
</dbReference>
<protein>
    <recommendedName>
        <fullName evidence="1">Methionine import ATP-binding protein MetN 2</fullName>
        <ecNumber evidence="1">7.4.2.11</ecNumber>
    </recommendedName>
</protein>
<organism>
    <name type="scientific">Oceanobacillus iheyensis (strain DSM 14371 / CIP 107618 / JCM 11309 / KCTC 3954 / HTE831)</name>
    <dbReference type="NCBI Taxonomy" id="221109"/>
    <lineage>
        <taxon>Bacteria</taxon>
        <taxon>Bacillati</taxon>
        <taxon>Bacillota</taxon>
        <taxon>Bacilli</taxon>
        <taxon>Bacillales</taxon>
        <taxon>Bacillaceae</taxon>
        <taxon>Oceanobacillus</taxon>
    </lineage>
</organism>
<accession>Q8ENU2</accession>
<evidence type="ECO:0000255" key="1">
    <source>
        <dbReference type="HAMAP-Rule" id="MF_01719"/>
    </source>
</evidence>
<sequence>MISIEGLSKVFSLNKKDIKAVDSLTLNIENGDIYGVIGYSGAGKSTFVRLINRLEEPTSGKVTIGDQVITELNKNDLRVARQDIGMIFQHFNLLWSRTVEDNIGFPLEIAGVDKQEKARRVKELIGLVGLEGREKSYPSQLSGGQKQRVGIARALANSPKVLLCDEATSALDPETTNQILSLLQDINEKLNLTIILITHEMHVIRKICNRVAVMEQGKVVEEGQVLDVFTNPKQLVTRKFVEQVMSSNEDSDISTIIENYPDGVLYRVHFLGETTNQTLISQIAKQFSVDLNIIQGNITQTQAGSYGALVVQVTGNESEIERAKSFIESQESVELEVIQHAK</sequence>
<name>METN2_OCEIH</name>
<keyword id="KW-0029">Amino-acid transport</keyword>
<keyword id="KW-0067">ATP-binding</keyword>
<keyword id="KW-1003">Cell membrane</keyword>
<keyword id="KW-0472">Membrane</keyword>
<keyword id="KW-0547">Nucleotide-binding</keyword>
<keyword id="KW-1185">Reference proteome</keyword>
<keyword id="KW-1278">Translocase</keyword>
<keyword id="KW-0813">Transport</keyword>
<reference key="1">
    <citation type="journal article" date="2002" name="Nucleic Acids Res.">
        <title>Genome sequence of Oceanobacillus iheyensis isolated from the Iheya Ridge and its unexpected adaptive capabilities to extreme environments.</title>
        <authorList>
            <person name="Takami H."/>
            <person name="Takaki Y."/>
            <person name="Uchiyama I."/>
        </authorList>
    </citation>
    <scope>NUCLEOTIDE SEQUENCE [LARGE SCALE GENOMIC DNA]</scope>
    <source>
        <strain>DSM 14371 / CIP 107618 / JCM 11309 / KCTC 3954 / HTE831</strain>
    </source>
</reference>
<comment type="function">
    <text evidence="1">Part of the ABC transporter complex MetNIQ involved in methionine import. Responsible for energy coupling to the transport system.</text>
</comment>
<comment type="catalytic activity">
    <reaction evidence="1">
        <text>L-methionine(out) + ATP + H2O = L-methionine(in) + ADP + phosphate + H(+)</text>
        <dbReference type="Rhea" id="RHEA:29779"/>
        <dbReference type="ChEBI" id="CHEBI:15377"/>
        <dbReference type="ChEBI" id="CHEBI:15378"/>
        <dbReference type="ChEBI" id="CHEBI:30616"/>
        <dbReference type="ChEBI" id="CHEBI:43474"/>
        <dbReference type="ChEBI" id="CHEBI:57844"/>
        <dbReference type="ChEBI" id="CHEBI:456216"/>
        <dbReference type="EC" id="7.4.2.11"/>
    </reaction>
</comment>
<comment type="catalytic activity">
    <reaction evidence="1">
        <text>D-methionine(out) + ATP + H2O = D-methionine(in) + ADP + phosphate + H(+)</text>
        <dbReference type="Rhea" id="RHEA:29767"/>
        <dbReference type="ChEBI" id="CHEBI:15377"/>
        <dbReference type="ChEBI" id="CHEBI:15378"/>
        <dbReference type="ChEBI" id="CHEBI:30616"/>
        <dbReference type="ChEBI" id="CHEBI:43474"/>
        <dbReference type="ChEBI" id="CHEBI:57932"/>
        <dbReference type="ChEBI" id="CHEBI:456216"/>
        <dbReference type="EC" id="7.4.2.11"/>
    </reaction>
</comment>
<comment type="subunit">
    <text evidence="1">The complex is composed of two ATP-binding proteins (MetN), two transmembrane proteins (MetI) and a solute-binding protein (MetQ).</text>
</comment>
<comment type="subcellular location">
    <subcellularLocation>
        <location evidence="1">Cell membrane</location>
        <topology evidence="1">Peripheral membrane protein</topology>
    </subcellularLocation>
</comment>
<comment type="similarity">
    <text evidence="1">Belongs to the ABC transporter superfamily. Methionine importer (TC 3.A.1.24) family.</text>
</comment>
<gene>
    <name evidence="1" type="primary">metN2</name>
    <name type="ordered locus">OB2384</name>
</gene>
<proteinExistence type="inferred from homology"/>